<keyword id="KW-0574">Periplasm</keyword>
<keyword id="KW-0732">Signal</keyword>
<protein>
    <recommendedName>
        <fullName>Iron uptake system component EfeO</fullName>
    </recommendedName>
</protein>
<name>EFEO_YERPN</name>
<evidence type="ECO:0000250" key="1"/>
<evidence type="ECO:0000255" key="2"/>
<evidence type="ECO:0000305" key="3"/>
<proteinExistence type="inferred from homology"/>
<reference key="1">
    <citation type="journal article" date="2006" name="J. Bacteriol.">
        <title>Complete genome sequence of Yersinia pestis strains Antiqua and Nepal516: evidence of gene reduction in an emerging pathogen.</title>
        <authorList>
            <person name="Chain P.S.G."/>
            <person name="Hu P."/>
            <person name="Malfatti S.A."/>
            <person name="Radnedge L."/>
            <person name="Larimer F."/>
            <person name="Vergez L.M."/>
            <person name="Worsham P."/>
            <person name="Chu M.C."/>
            <person name="Andersen G.L."/>
        </authorList>
    </citation>
    <scope>NUCLEOTIDE SEQUENCE [LARGE SCALE GENOMIC DNA]</scope>
    <source>
        <strain>Nepal516</strain>
    </source>
</reference>
<reference key="2">
    <citation type="submission" date="2009-04" db="EMBL/GenBank/DDBJ databases">
        <title>Yersinia pestis Nepal516A whole genome shotgun sequencing project.</title>
        <authorList>
            <person name="Plunkett G. III"/>
            <person name="Anderson B.D."/>
            <person name="Baumler D.J."/>
            <person name="Burland V."/>
            <person name="Cabot E.L."/>
            <person name="Glasner J.D."/>
            <person name="Mau B."/>
            <person name="Neeno-Eckwall E."/>
            <person name="Perna N.T."/>
            <person name="Munk A.C."/>
            <person name="Tapia R."/>
            <person name="Green L.D."/>
            <person name="Rogers Y.C."/>
            <person name="Detter J.C."/>
            <person name="Bruce D.C."/>
            <person name="Brettin T.S."/>
        </authorList>
    </citation>
    <scope>NUCLEOTIDE SEQUENCE [LARGE SCALE GENOMIC DNA]</scope>
    <source>
        <strain>Nepal516</strain>
    </source>
</reference>
<dbReference type="EMBL" id="CP000305">
    <property type="protein sequence ID" value="ABG18596.1"/>
    <property type="molecule type" value="Genomic_DNA"/>
</dbReference>
<dbReference type="EMBL" id="ACNQ01000013">
    <property type="protein sequence ID" value="EEO76347.1"/>
    <property type="molecule type" value="Genomic_DNA"/>
</dbReference>
<dbReference type="RefSeq" id="WP_002211166.1">
    <property type="nucleotide sequence ID" value="NZ_ACNQ01000013.1"/>
</dbReference>
<dbReference type="SMR" id="Q1CHD4"/>
<dbReference type="GeneID" id="57976726"/>
<dbReference type="KEGG" id="ypn:YPN_2268"/>
<dbReference type="HOGENOM" id="CLU_050342_2_1_6"/>
<dbReference type="Proteomes" id="UP000008936">
    <property type="component" value="Chromosome"/>
</dbReference>
<dbReference type="GO" id="GO:0042597">
    <property type="term" value="C:periplasmic space"/>
    <property type="evidence" value="ECO:0007669"/>
    <property type="project" value="UniProtKB-SubCell"/>
</dbReference>
<dbReference type="CDD" id="cd04203">
    <property type="entry name" value="Cupredoxin_like_3"/>
    <property type="match status" value="1"/>
</dbReference>
<dbReference type="CDD" id="cd14656">
    <property type="entry name" value="Imelysin-like_EfeO"/>
    <property type="match status" value="1"/>
</dbReference>
<dbReference type="Gene3D" id="2.60.40.420">
    <property type="entry name" value="Cupredoxins - blue copper proteins"/>
    <property type="match status" value="1"/>
</dbReference>
<dbReference type="Gene3D" id="1.20.1420.20">
    <property type="entry name" value="M75 peptidase, HXXE motif"/>
    <property type="match status" value="1"/>
</dbReference>
<dbReference type="InterPro" id="IPR008972">
    <property type="entry name" value="Cupredoxin"/>
</dbReference>
<dbReference type="InterPro" id="IPR050894">
    <property type="entry name" value="EfeM/EfeO_iron_uptake"/>
</dbReference>
<dbReference type="InterPro" id="IPR028096">
    <property type="entry name" value="EfeO_Cupredoxin"/>
</dbReference>
<dbReference type="InterPro" id="IPR018976">
    <property type="entry name" value="Imelysin-like"/>
</dbReference>
<dbReference type="InterPro" id="IPR034981">
    <property type="entry name" value="Imelysin-like_EfeO/Algp7"/>
</dbReference>
<dbReference type="InterPro" id="IPR038352">
    <property type="entry name" value="Imelysin_sf"/>
</dbReference>
<dbReference type="InterPro" id="IPR053377">
    <property type="entry name" value="Iron_uptake_EfeM/EfeO"/>
</dbReference>
<dbReference type="NCBIfam" id="NF041757">
    <property type="entry name" value="EfeO"/>
    <property type="match status" value="1"/>
</dbReference>
<dbReference type="NCBIfam" id="NF007697">
    <property type="entry name" value="PRK10378.1"/>
    <property type="match status" value="1"/>
</dbReference>
<dbReference type="PANTHER" id="PTHR39192">
    <property type="entry name" value="IRON UPTAKE SYSTEM COMPONENT EFEO"/>
    <property type="match status" value="1"/>
</dbReference>
<dbReference type="PANTHER" id="PTHR39192:SF1">
    <property type="entry name" value="IRON UPTAKE SYSTEM COMPONENT EFEO"/>
    <property type="match status" value="1"/>
</dbReference>
<dbReference type="Pfam" id="PF13473">
    <property type="entry name" value="Cupredoxin_1"/>
    <property type="match status" value="1"/>
</dbReference>
<dbReference type="Pfam" id="PF09375">
    <property type="entry name" value="Peptidase_M75"/>
    <property type="match status" value="1"/>
</dbReference>
<dbReference type="SUPFAM" id="SSF49503">
    <property type="entry name" value="Cupredoxins"/>
    <property type="match status" value="1"/>
</dbReference>
<feature type="signal peptide" evidence="2">
    <location>
        <begin position="1"/>
        <end position="27"/>
    </location>
</feature>
<feature type="chain" id="PRO_0000278562" description="Iron uptake system component EfeO">
    <location>
        <begin position="28"/>
        <end position="376"/>
    </location>
</feature>
<gene>
    <name type="primary">efeO</name>
    <name type="ordered locus">YPN_2268</name>
    <name type="ORF">YP516_2549</name>
</gene>
<accession>Q1CHD4</accession>
<accession>C4GUG0</accession>
<sequence>MSIWFFRRTALHAALLSLPVFAISAQAADIQQVKITVNDKQCEPMALTVPAGKTQFIVHNVSQKGLEWEILKGVMVVEERENIAPGFTQKMTANLEPGEYDMTCGLLSNPKGKLTVTVAAGEQAPVKPDAMALVGPIAEYKVYVTQEVAQLVSQTKAFTDAVKAGDLALARKLYAPTRQHYERIEPIAELFSDLDGSIDAREDDFEQKSADPKFTGFHRLEKILFGDNTTKGADKFADLLYQDTLELQKRIAGLTFAPNKVVGGAAGLIEEVAASKISGEEDRYSRTDLWDFQANVDGAQKIVNLLRPLLEKADKPLLQKIDANFNTVDSVLAKYRTKEGYESYEKLTDADRNAMKGPITALAEDLAQLRGVLGLD</sequence>
<comment type="function">
    <text evidence="1">Involved in Fe(2+) uptake. Could be an iron-binding and/or electron-transfer component (By similarity).</text>
</comment>
<comment type="subunit">
    <text evidence="1">Monomer. Part of a ferrous iron transporter composed of EfeU, EfeO and EfeB (By similarity).</text>
</comment>
<comment type="subcellular location">
    <subcellularLocation>
        <location evidence="1">Periplasm</location>
    </subcellularLocation>
</comment>
<comment type="similarity">
    <text evidence="3">Belongs to the EfeM/EfeO family.</text>
</comment>
<organism>
    <name type="scientific">Yersinia pestis bv. Antiqua (strain Nepal516)</name>
    <dbReference type="NCBI Taxonomy" id="377628"/>
    <lineage>
        <taxon>Bacteria</taxon>
        <taxon>Pseudomonadati</taxon>
        <taxon>Pseudomonadota</taxon>
        <taxon>Gammaproteobacteria</taxon>
        <taxon>Enterobacterales</taxon>
        <taxon>Yersiniaceae</taxon>
        <taxon>Yersinia</taxon>
    </lineage>
</organism>